<protein>
    <recommendedName>
        <fullName evidence="1">Ribosome-binding factor A</fullName>
    </recommendedName>
</protein>
<keyword id="KW-0963">Cytoplasm</keyword>
<keyword id="KW-0690">Ribosome biogenesis</keyword>
<dbReference type="EMBL" id="CP000921">
    <property type="protein sequence ID" value="ACO23714.1"/>
    <property type="molecule type" value="Genomic_DNA"/>
</dbReference>
<dbReference type="RefSeq" id="WP_001273601.1">
    <property type="nucleotide sequence ID" value="NC_012469.1"/>
</dbReference>
<dbReference type="SMR" id="C1CQ49"/>
<dbReference type="GeneID" id="93738448"/>
<dbReference type="KEGG" id="snt:SPT_0587"/>
<dbReference type="HOGENOM" id="CLU_089475_3_0_9"/>
<dbReference type="GO" id="GO:0005829">
    <property type="term" value="C:cytosol"/>
    <property type="evidence" value="ECO:0007669"/>
    <property type="project" value="TreeGrafter"/>
</dbReference>
<dbReference type="GO" id="GO:0043024">
    <property type="term" value="F:ribosomal small subunit binding"/>
    <property type="evidence" value="ECO:0007669"/>
    <property type="project" value="TreeGrafter"/>
</dbReference>
<dbReference type="GO" id="GO:0030490">
    <property type="term" value="P:maturation of SSU-rRNA"/>
    <property type="evidence" value="ECO:0007669"/>
    <property type="project" value="UniProtKB-UniRule"/>
</dbReference>
<dbReference type="FunFam" id="3.30.300.20:FF:000012">
    <property type="entry name" value="Ribosome-binding factor A"/>
    <property type="match status" value="1"/>
</dbReference>
<dbReference type="Gene3D" id="3.30.300.20">
    <property type="match status" value="1"/>
</dbReference>
<dbReference type="HAMAP" id="MF_00003">
    <property type="entry name" value="RbfA"/>
    <property type="match status" value="1"/>
</dbReference>
<dbReference type="InterPro" id="IPR015946">
    <property type="entry name" value="KH_dom-like_a/b"/>
</dbReference>
<dbReference type="InterPro" id="IPR000238">
    <property type="entry name" value="RbfA"/>
</dbReference>
<dbReference type="InterPro" id="IPR023799">
    <property type="entry name" value="RbfA_dom_sf"/>
</dbReference>
<dbReference type="InterPro" id="IPR020053">
    <property type="entry name" value="Ribosome-bd_factorA_CS"/>
</dbReference>
<dbReference type="NCBIfam" id="TIGR00082">
    <property type="entry name" value="rbfA"/>
    <property type="match status" value="1"/>
</dbReference>
<dbReference type="PANTHER" id="PTHR33515">
    <property type="entry name" value="RIBOSOME-BINDING FACTOR A, CHLOROPLASTIC-RELATED"/>
    <property type="match status" value="1"/>
</dbReference>
<dbReference type="PANTHER" id="PTHR33515:SF1">
    <property type="entry name" value="RIBOSOME-BINDING FACTOR A, CHLOROPLASTIC-RELATED"/>
    <property type="match status" value="1"/>
</dbReference>
<dbReference type="Pfam" id="PF02033">
    <property type="entry name" value="RBFA"/>
    <property type="match status" value="1"/>
</dbReference>
<dbReference type="SUPFAM" id="SSF89919">
    <property type="entry name" value="Ribosome-binding factor A, RbfA"/>
    <property type="match status" value="1"/>
</dbReference>
<dbReference type="PROSITE" id="PS01319">
    <property type="entry name" value="RBFA"/>
    <property type="match status" value="1"/>
</dbReference>
<reference key="1">
    <citation type="journal article" date="2010" name="Genome Biol.">
        <title>Structure and dynamics of the pan-genome of Streptococcus pneumoniae and closely related species.</title>
        <authorList>
            <person name="Donati C."/>
            <person name="Hiller N.L."/>
            <person name="Tettelin H."/>
            <person name="Muzzi A."/>
            <person name="Croucher N.J."/>
            <person name="Angiuoli S.V."/>
            <person name="Oggioni M."/>
            <person name="Dunning Hotopp J.C."/>
            <person name="Hu F.Z."/>
            <person name="Riley D.R."/>
            <person name="Covacci A."/>
            <person name="Mitchell T.J."/>
            <person name="Bentley S.D."/>
            <person name="Kilian M."/>
            <person name="Ehrlich G.D."/>
            <person name="Rappuoli R."/>
            <person name="Moxon E.R."/>
            <person name="Masignani V."/>
        </authorList>
    </citation>
    <scope>NUCLEOTIDE SEQUENCE [LARGE SCALE GENOMIC DNA]</scope>
    <source>
        <strain>Taiwan19F-14</strain>
    </source>
</reference>
<sequence length="116" mass="13310">MANHFRTDRVGMEIKREVNEILQKKVRDPRVQGVTITDVQMLGDLSVAKVYYTILSNLASDNQKAQIGLEKATGTIKRELGRNLKLYKIPDLTFVKDESIEYGNKIDEMLRNLDKN</sequence>
<evidence type="ECO:0000255" key="1">
    <source>
        <dbReference type="HAMAP-Rule" id="MF_00003"/>
    </source>
</evidence>
<feature type="chain" id="PRO_1000116221" description="Ribosome-binding factor A">
    <location>
        <begin position="1"/>
        <end position="116"/>
    </location>
</feature>
<name>RBFA_STRZT</name>
<accession>C1CQ49</accession>
<comment type="function">
    <text evidence="1">One of several proteins that assist in the late maturation steps of the functional core of the 30S ribosomal subunit. Associates with free 30S ribosomal subunits (but not with 30S subunits that are part of 70S ribosomes or polysomes). Required for efficient processing of 16S rRNA. May interact with the 5'-terminal helix region of 16S rRNA.</text>
</comment>
<comment type="subunit">
    <text evidence="1">Monomer. Binds 30S ribosomal subunits, but not 50S ribosomal subunits or 70S ribosomes.</text>
</comment>
<comment type="subcellular location">
    <subcellularLocation>
        <location evidence="1">Cytoplasm</location>
    </subcellularLocation>
</comment>
<comment type="similarity">
    <text evidence="1">Belongs to the RbfA family.</text>
</comment>
<organism>
    <name type="scientific">Streptococcus pneumoniae (strain Taiwan19F-14)</name>
    <dbReference type="NCBI Taxonomy" id="487213"/>
    <lineage>
        <taxon>Bacteria</taxon>
        <taxon>Bacillati</taxon>
        <taxon>Bacillota</taxon>
        <taxon>Bacilli</taxon>
        <taxon>Lactobacillales</taxon>
        <taxon>Streptococcaceae</taxon>
        <taxon>Streptococcus</taxon>
    </lineage>
</organism>
<proteinExistence type="inferred from homology"/>
<gene>
    <name evidence="1" type="primary">rbfA</name>
    <name type="ordered locus">SPT_0587</name>
</gene>